<name>RS7_STRZJ</name>
<reference key="1">
    <citation type="journal article" date="2010" name="Genome Biol.">
        <title>Structure and dynamics of the pan-genome of Streptococcus pneumoniae and closely related species.</title>
        <authorList>
            <person name="Donati C."/>
            <person name="Hiller N.L."/>
            <person name="Tettelin H."/>
            <person name="Muzzi A."/>
            <person name="Croucher N.J."/>
            <person name="Angiuoli S.V."/>
            <person name="Oggioni M."/>
            <person name="Dunning Hotopp J.C."/>
            <person name="Hu F.Z."/>
            <person name="Riley D.R."/>
            <person name="Covacci A."/>
            <person name="Mitchell T.J."/>
            <person name="Bentley S.D."/>
            <person name="Kilian M."/>
            <person name="Ehrlich G.D."/>
            <person name="Rappuoli R."/>
            <person name="Moxon E.R."/>
            <person name="Masignani V."/>
        </authorList>
    </citation>
    <scope>NUCLEOTIDE SEQUENCE [LARGE SCALE GENOMIC DNA]</scope>
    <source>
        <strain>JJA</strain>
    </source>
</reference>
<sequence>MSRKNRAPKRDVLPDPLYNSQLVTRLINRVMLDGKRGTAASIVYGAFEQIKEATGNDALEVFETAMENIMPVLEVRARRVGGSNYQVPVEVRPERRTTLGLRWLVTIARLRGEHTMQDRLAKEILDAANNTGAAVKKREDTHRMAEANRAFAHFRW</sequence>
<keyword id="KW-0687">Ribonucleoprotein</keyword>
<keyword id="KW-0689">Ribosomal protein</keyword>
<keyword id="KW-0694">RNA-binding</keyword>
<keyword id="KW-0699">rRNA-binding</keyword>
<keyword id="KW-0820">tRNA-binding</keyword>
<dbReference type="EMBL" id="CP000919">
    <property type="protein sequence ID" value="ACO19896.1"/>
    <property type="molecule type" value="Genomic_DNA"/>
</dbReference>
<dbReference type="RefSeq" id="WP_000087873.1">
    <property type="nucleotide sequence ID" value="NC_012466.1"/>
</dbReference>
<dbReference type="SMR" id="C1CC61"/>
<dbReference type="GeneID" id="93738576"/>
<dbReference type="KEGG" id="sjj:SPJ_0280"/>
<dbReference type="HOGENOM" id="CLU_072226_1_1_9"/>
<dbReference type="Proteomes" id="UP000002206">
    <property type="component" value="Chromosome"/>
</dbReference>
<dbReference type="GO" id="GO:0015935">
    <property type="term" value="C:small ribosomal subunit"/>
    <property type="evidence" value="ECO:0007669"/>
    <property type="project" value="InterPro"/>
</dbReference>
<dbReference type="GO" id="GO:0019843">
    <property type="term" value="F:rRNA binding"/>
    <property type="evidence" value="ECO:0007669"/>
    <property type="project" value="UniProtKB-UniRule"/>
</dbReference>
<dbReference type="GO" id="GO:0003735">
    <property type="term" value="F:structural constituent of ribosome"/>
    <property type="evidence" value="ECO:0007669"/>
    <property type="project" value="InterPro"/>
</dbReference>
<dbReference type="GO" id="GO:0000049">
    <property type="term" value="F:tRNA binding"/>
    <property type="evidence" value="ECO:0007669"/>
    <property type="project" value="UniProtKB-UniRule"/>
</dbReference>
<dbReference type="GO" id="GO:0006412">
    <property type="term" value="P:translation"/>
    <property type="evidence" value="ECO:0007669"/>
    <property type="project" value="UniProtKB-UniRule"/>
</dbReference>
<dbReference type="CDD" id="cd14869">
    <property type="entry name" value="uS7_Bacteria"/>
    <property type="match status" value="1"/>
</dbReference>
<dbReference type="FunFam" id="1.10.455.10:FF:000001">
    <property type="entry name" value="30S ribosomal protein S7"/>
    <property type="match status" value="1"/>
</dbReference>
<dbReference type="Gene3D" id="1.10.455.10">
    <property type="entry name" value="Ribosomal protein S7 domain"/>
    <property type="match status" value="1"/>
</dbReference>
<dbReference type="HAMAP" id="MF_00480_B">
    <property type="entry name" value="Ribosomal_uS7_B"/>
    <property type="match status" value="1"/>
</dbReference>
<dbReference type="InterPro" id="IPR000235">
    <property type="entry name" value="Ribosomal_uS7"/>
</dbReference>
<dbReference type="InterPro" id="IPR005717">
    <property type="entry name" value="Ribosomal_uS7_bac/org-type"/>
</dbReference>
<dbReference type="InterPro" id="IPR020606">
    <property type="entry name" value="Ribosomal_uS7_CS"/>
</dbReference>
<dbReference type="InterPro" id="IPR023798">
    <property type="entry name" value="Ribosomal_uS7_dom"/>
</dbReference>
<dbReference type="InterPro" id="IPR036823">
    <property type="entry name" value="Ribosomal_uS7_dom_sf"/>
</dbReference>
<dbReference type="NCBIfam" id="TIGR01029">
    <property type="entry name" value="rpsG_bact"/>
    <property type="match status" value="1"/>
</dbReference>
<dbReference type="PANTHER" id="PTHR11205">
    <property type="entry name" value="RIBOSOMAL PROTEIN S7"/>
    <property type="match status" value="1"/>
</dbReference>
<dbReference type="Pfam" id="PF00177">
    <property type="entry name" value="Ribosomal_S7"/>
    <property type="match status" value="1"/>
</dbReference>
<dbReference type="PIRSF" id="PIRSF002122">
    <property type="entry name" value="RPS7p_RPS7a_RPS5e_RPS7o"/>
    <property type="match status" value="1"/>
</dbReference>
<dbReference type="SUPFAM" id="SSF47973">
    <property type="entry name" value="Ribosomal protein S7"/>
    <property type="match status" value="1"/>
</dbReference>
<dbReference type="PROSITE" id="PS00052">
    <property type="entry name" value="RIBOSOMAL_S7"/>
    <property type="match status" value="1"/>
</dbReference>
<feature type="chain" id="PRO_1000135628" description="Small ribosomal subunit protein uS7">
    <location>
        <begin position="1"/>
        <end position="156"/>
    </location>
</feature>
<organism>
    <name type="scientific">Streptococcus pneumoniae (strain JJA)</name>
    <dbReference type="NCBI Taxonomy" id="488222"/>
    <lineage>
        <taxon>Bacteria</taxon>
        <taxon>Bacillati</taxon>
        <taxon>Bacillota</taxon>
        <taxon>Bacilli</taxon>
        <taxon>Lactobacillales</taxon>
        <taxon>Streptococcaceae</taxon>
        <taxon>Streptococcus</taxon>
    </lineage>
</organism>
<proteinExistence type="inferred from homology"/>
<accession>C1CC61</accession>
<comment type="function">
    <text evidence="1">One of the primary rRNA binding proteins, it binds directly to 16S rRNA where it nucleates assembly of the head domain of the 30S subunit. Is located at the subunit interface close to the decoding center, probably blocks exit of the E-site tRNA.</text>
</comment>
<comment type="subunit">
    <text evidence="1">Part of the 30S ribosomal subunit. Contacts proteins S9 and S11.</text>
</comment>
<comment type="similarity">
    <text evidence="1">Belongs to the universal ribosomal protein uS7 family.</text>
</comment>
<protein>
    <recommendedName>
        <fullName evidence="1">Small ribosomal subunit protein uS7</fullName>
    </recommendedName>
    <alternativeName>
        <fullName evidence="2">30S ribosomal protein S7</fullName>
    </alternativeName>
</protein>
<gene>
    <name evidence="1" type="primary">rpsG</name>
    <name type="ordered locus">SPJ_0280</name>
</gene>
<evidence type="ECO:0000255" key="1">
    <source>
        <dbReference type="HAMAP-Rule" id="MF_00480"/>
    </source>
</evidence>
<evidence type="ECO:0000305" key="2"/>